<organism>
    <name type="scientific">Gallus gallus</name>
    <name type="common">Chicken</name>
    <dbReference type="NCBI Taxonomy" id="9031"/>
    <lineage>
        <taxon>Eukaryota</taxon>
        <taxon>Metazoa</taxon>
        <taxon>Chordata</taxon>
        <taxon>Craniata</taxon>
        <taxon>Vertebrata</taxon>
        <taxon>Euteleostomi</taxon>
        <taxon>Archelosauria</taxon>
        <taxon>Archosauria</taxon>
        <taxon>Dinosauria</taxon>
        <taxon>Saurischia</taxon>
        <taxon>Theropoda</taxon>
        <taxon>Coelurosauria</taxon>
        <taxon>Aves</taxon>
        <taxon>Neognathae</taxon>
        <taxon>Galloanserae</taxon>
        <taxon>Galliformes</taxon>
        <taxon>Phasianidae</taxon>
        <taxon>Phasianinae</taxon>
        <taxon>Gallus</taxon>
    </lineage>
</organism>
<gene>
    <name type="primary">TECPR1</name>
</gene>
<comment type="function">
    <text evidence="1">Tethering factor involved in autophagy. Involved in autophagosome maturation by promoting the autophagosome fusion with lysosomes. Binds phosphatidylinositol-3-phosphate (PtdIns(3)P) present at the surface of autophagosomes (By similarity).</text>
</comment>
<comment type="subcellular location">
    <subcellularLocation>
        <location evidence="1">Cytoplasmic vesicle</location>
        <location evidence="1">Autophagosome membrane</location>
    </subcellularLocation>
    <subcellularLocation>
        <location evidence="1">Lysosome membrane</location>
    </subcellularLocation>
    <text evidence="1">Localizes to Lysosome membranes, and binds PtdIns(3)P at the surface of autophagosome. Localizes to autolysosomes, a vesicle formed by the fusion between autophagosomes and lysosomes (By similarity).</text>
</comment>
<comment type="domain">
    <text evidence="1">The PH domain mediates the binding to phosphatidylinositol-3-phosphate (PtdIns(3)P).</text>
</comment>
<comment type="similarity">
    <text evidence="3">Belongs to the TECPR1 family.</text>
</comment>
<accession>E1BZR9</accession>
<feature type="chain" id="PRO_0000416887" description="Tectonin beta-propeller repeat-containing protein 1">
    <location>
        <begin position="1"/>
        <end position="1173"/>
    </location>
</feature>
<feature type="repeat" description="TECPR 1">
    <location>
        <begin position="210"/>
        <end position="239"/>
    </location>
</feature>
<feature type="repeat" description="TECPR 2">
    <location>
        <begin position="254"/>
        <end position="285"/>
    </location>
</feature>
<feature type="repeat" description="TECPR 3">
    <location>
        <begin position="301"/>
        <end position="332"/>
    </location>
</feature>
<feature type="repeat" description="TECPR 4">
    <location>
        <begin position="344"/>
        <end position="376"/>
    </location>
</feature>
<feature type="domain" description="PH">
    <location>
        <begin position="618"/>
        <end position="727"/>
    </location>
</feature>
<feature type="repeat" description="TECPR 5">
    <location>
        <begin position="739"/>
        <end position="766"/>
    </location>
</feature>
<feature type="repeat" description="TECPR 6">
    <location>
        <begin position="962"/>
        <end position="991"/>
    </location>
</feature>
<feature type="repeat" description="TECPR 7">
    <location>
        <begin position="1007"/>
        <end position="1037"/>
    </location>
</feature>
<feature type="repeat" description="TECPR 8">
    <location>
        <begin position="1053"/>
        <end position="1083"/>
    </location>
</feature>
<feature type="repeat" description="TECPR 9">
    <location>
        <begin position="1095"/>
        <end position="1135"/>
    </location>
</feature>
<feature type="region of interest" description="Disordered" evidence="2">
    <location>
        <begin position="413"/>
        <end position="495"/>
    </location>
</feature>
<feature type="region of interest" description="Disordered" evidence="2">
    <location>
        <begin position="1147"/>
        <end position="1173"/>
    </location>
</feature>
<feature type="compositionally biased region" description="Polar residues" evidence="2">
    <location>
        <begin position="413"/>
        <end position="430"/>
    </location>
</feature>
<feature type="compositionally biased region" description="Low complexity" evidence="2">
    <location>
        <begin position="431"/>
        <end position="456"/>
    </location>
</feature>
<feature type="compositionally biased region" description="Basic and acidic residues" evidence="2">
    <location>
        <begin position="475"/>
        <end position="485"/>
    </location>
</feature>
<feature type="compositionally biased region" description="Polar residues" evidence="2">
    <location>
        <begin position="486"/>
        <end position="495"/>
    </location>
</feature>
<protein>
    <recommendedName>
        <fullName>Tectonin beta-propeller repeat-containing protein 1</fullName>
    </recommendedName>
</protein>
<dbReference type="EMBL" id="AADN02023905">
    <property type="status" value="NOT_ANNOTATED_CDS"/>
    <property type="molecule type" value="Genomic_DNA"/>
</dbReference>
<dbReference type="EMBL" id="AADN02023906">
    <property type="status" value="NOT_ANNOTATED_CDS"/>
    <property type="molecule type" value="Genomic_DNA"/>
</dbReference>
<dbReference type="SMR" id="E1BZR9"/>
<dbReference type="FunCoup" id="E1BZR9">
    <property type="interactions" value="996"/>
</dbReference>
<dbReference type="GlyGen" id="E1BZR9">
    <property type="glycosylation" value="2 sites"/>
</dbReference>
<dbReference type="PaxDb" id="9031-ENSGALP00000005536"/>
<dbReference type="VEuPathDB" id="HostDB:geneid_416436"/>
<dbReference type="eggNOG" id="KOG3669">
    <property type="taxonomic scope" value="Eukaryota"/>
</dbReference>
<dbReference type="InParanoid" id="E1BZR9"/>
<dbReference type="OrthoDB" id="72441at2759"/>
<dbReference type="PhylomeDB" id="E1BZR9"/>
<dbReference type="TreeFam" id="TF323648"/>
<dbReference type="Proteomes" id="UP000000539">
    <property type="component" value="Unassembled WGS sequence"/>
</dbReference>
<dbReference type="GO" id="GO:0000421">
    <property type="term" value="C:autophagosome membrane"/>
    <property type="evidence" value="ECO:0000250"/>
    <property type="project" value="UniProtKB"/>
</dbReference>
<dbReference type="GO" id="GO:0031410">
    <property type="term" value="C:cytoplasmic vesicle"/>
    <property type="evidence" value="ECO:0007669"/>
    <property type="project" value="UniProtKB-KW"/>
</dbReference>
<dbReference type="GO" id="GO:0005765">
    <property type="term" value="C:lysosomal membrane"/>
    <property type="evidence" value="ECO:0000250"/>
    <property type="project" value="UniProtKB"/>
</dbReference>
<dbReference type="GO" id="GO:0032266">
    <property type="term" value="F:phosphatidylinositol-3-phosphate binding"/>
    <property type="evidence" value="ECO:0000250"/>
    <property type="project" value="UniProtKB"/>
</dbReference>
<dbReference type="GO" id="GO:0097352">
    <property type="term" value="P:autophagosome maturation"/>
    <property type="evidence" value="ECO:0000250"/>
    <property type="project" value="UniProtKB"/>
</dbReference>
<dbReference type="GO" id="GO:0006914">
    <property type="term" value="P:autophagy"/>
    <property type="evidence" value="ECO:0000250"/>
    <property type="project" value="UniProtKB"/>
</dbReference>
<dbReference type="CDD" id="cd13300">
    <property type="entry name" value="PH1_TECPR1"/>
    <property type="match status" value="1"/>
</dbReference>
<dbReference type="FunFam" id="2.30.29.30:FF:000690">
    <property type="entry name" value="Tectonin beta-propeller repeat-containing protein 1"/>
    <property type="match status" value="1"/>
</dbReference>
<dbReference type="Gene3D" id="2.30.29.30">
    <property type="entry name" value="Pleckstrin-homology domain (PH domain)/Phosphotyrosine-binding domain (PTB)"/>
    <property type="match status" value="1"/>
</dbReference>
<dbReference type="InterPro" id="IPR006624">
    <property type="entry name" value="Beta-propeller_rpt_TECPR"/>
</dbReference>
<dbReference type="InterPro" id="IPR006614">
    <property type="entry name" value="Peroxin/Ferlin"/>
</dbReference>
<dbReference type="InterPro" id="IPR011993">
    <property type="entry name" value="PH-like_dom_sf"/>
</dbReference>
<dbReference type="InterPro" id="IPR010482">
    <property type="entry name" value="TECPR1-like_DysF"/>
</dbReference>
<dbReference type="InterPro" id="IPR051513">
    <property type="entry name" value="Tectonin_beta-propeller"/>
</dbReference>
<dbReference type="PANTHER" id="PTHR23250">
    <property type="entry name" value="DYSFERLIN-RELATED"/>
    <property type="match status" value="1"/>
</dbReference>
<dbReference type="PANTHER" id="PTHR23250:SF1">
    <property type="entry name" value="TECTONIN BETA-PROPELLER REPEAT-CONTAINING PROTEIN 1"/>
    <property type="match status" value="1"/>
</dbReference>
<dbReference type="Pfam" id="PF06462">
    <property type="entry name" value="Hyd_WA"/>
    <property type="match status" value="4"/>
</dbReference>
<dbReference type="Pfam" id="PF06398">
    <property type="entry name" value="Pex24p"/>
    <property type="match status" value="2"/>
</dbReference>
<dbReference type="Pfam" id="PF19193">
    <property type="entry name" value="Tectonin"/>
    <property type="match status" value="1"/>
</dbReference>
<dbReference type="SMART" id="SM00694">
    <property type="entry name" value="DysFC"/>
    <property type="match status" value="2"/>
</dbReference>
<dbReference type="SMART" id="SM00693">
    <property type="entry name" value="DysFN"/>
    <property type="match status" value="2"/>
</dbReference>
<dbReference type="SMART" id="SM00706">
    <property type="entry name" value="TECPR"/>
    <property type="match status" value="11"/>
</dbReference>
<dbReference type="SUPFAM" id="SSF50729">
    <property type="entry name" value="PH domain-like"/>
    <property type="match status" value="1"/>
</dbReference>
<reference key="1">
    <citation type="journal article" date="2004" name="Nature">
        <title>Sequence and comparative analysis of the chicken genome provide unique perspectives on vertebrate evolution.</title>
        <authorList>
            <person name="Hillier L.W."/>
            <person name="Miller W."/>
            <person name="Birney E."/>
            <person name="Warren W."/>
            <person name="Hardison R.C."/>
            <person name="Ponting C.P."/>
            <person name="Bork P."/>
            <person name="Burt D.W."/>
            <person name="Groenen M.A.M."/>
            <person name="Delany M.E."/>
            <person name="Dodgson J.B."/>
            <person name="Chinwalla A.T."/>
            <person name="Cliften P.F."/>
            <person name="Clifton S.W."/>
            <person name="Delehaunty K.D."/>
            <person name="Fronick C."/>
            <person name="Fulton R.S."/>
            <person name="Graves T.A."/>
            <person name="Kremitzki C."/>
            <person name="Layman D."/>
            <person name="Magrini V."/>
            <person name="McPherson J.D."/>
            <person name="Miner T.L."/>
            <person name="Minx P."/>
            <person name="Nash W.E."/>
            <person name="Nhan M.N."/>
            <person name="Nelson J.O."/>
            <person name="Oddy L.G."/>
            <person name="Pohl C.S."/>
            <person name="Randall-Maher J."/>
            <person name="Smith S.M."/>
            <person name="Wallis J.W."/>
            <person name="Yang S.-P."/>
            <person name="Romanov M.N."/>
            <person name="Rondelli C.M."/>
            <person name="Paton B."/>
            <person name="Smith J."/>
            <person name="Morrice D."/>
            <person name="Daniels L."/>
            <person name="Tempest H.G."/>
            <person name="Robertson L."/>
            <person name="Masabanda J.S."/>
            <person name="Griffin D.K."/>
            <person name="Vignal A."/>
            <person name="Fillon V."/>
            <person name="Jacobbson L."/>
            <person name="Kerje S."/>
            <person name="Andersson L."/>
            <person name="Crooijmans R.P."/>
            <person name="Aerts J."/>
            <person name="van der Poel J.J."/>
            <person name="Ellegren H."/>
            <person name="Caldwell R.B."/>
            <person name="Hubbard S.J."/>
            <person name="Grafham D.V."/>
            <person name="Kierzek A.M."/>
            <person name="McLaren S.R."/>
            <person name="Overton I.M."/>
            <person name="Arakawa H."/>
            <person name="Beattie K.J."/>
            <person name="Bezzubov Y."/>
            <person name="Boardman P.E."/>
            <person name="Bonfield J.K."/>
            <person name="Croning M.D.R."/>
            <person name="Davies R.M."/>
            <person name="Francis M.D."/>
            <person name="Humphray S.J."/>
            <person name="Scott C.E."/>
            <person name="Taylor R.G."/>
            <person name="Tickle C."/>
            <person name="Brown W.R.A."/>
            <person name="Rogers J."/>
            <person name="Buerstedde J.-M."/>
            <person name="Wilson S.A."/>
            <person name="Stubbs L."/>
            <person name="Ovcharenko I."/>
            <person name="Gordon L."/>
            <person name="Lucas S."/>
            <person name="Miller M.M."/>
            <person name="Inoko H."/>
            <person name="Shiina T."/>
            <person name="Kaufman J."/>
            <person name="Salomonsen J."/>
            <person name="Skjoedt K."/>
            <person name="Wong G.K.-S."/>
            <person name="Wang J."/>
            <person name="Liu B."/>
            <person name="Wang J."/>
            <person name="Yu J."/>
            <person name="Yang H."/>
            <person name="Nefedov M."/>
            <person name="Koriabine M."/>
            <person name="Dejong P.J."/>
            <person name="Goodstadt L."/>
            <person name="Webber C."/>
            <person name="Dickens N.J."/>
            <person name="Letunic I."/>
            <person name="Suyama M."/>
            <person name="Torrents D."/>
            <person name="von Mering C."/>
            <person name="Zdobnov E.M."/>
            <person name="Makova K."/>
            <person name="Nekrutenko A."/>
            <person name="Elnitski L."/>
            <person name="Eswara P."/>
            <person name="King D.C."/>
            <person name="Yang S.-P."/>
            <person name="Tyekucheva S."/>
            <person name="Radakrishnan A."/>
            <person name="Harris R.S."/>
            <person name="Chiaromonte F."/>
            <person name="Taylor J."/>
            <person name="He J."/>
            <person name="Rijnkels M."/>
            <person name="Griffiths-Jones S."/>
            <person name="Ureta-Vidal A."/>
            <person name="Hoffman M.M."/>
            <person name="Severin J."/>
            <person name="Searle S.M.J."/>
            <person name="Law A.S."/>
            <person name="Speed D."/>
            <person name="Waddington D."/>
            <person name="Cheng Z."/>
            <person name="Tuzun E."/>
            <person name="Eichler E."/>
            <person name="Bao Z."/>
            <person name="Flicek P."/>
            <person name="Shteynberg D.D."/>
            <person name="Brent M.R."/>
            <person name="Bye J.M."/>
            <person name="Huckle E.J."/>
            <person name="Chatterji S."/>
            <person name="Dewey C."/>
            <person name="Pachter L."/>
            <person name="Kouranov A."/>
            <person name="Mourelatos Z."/>
            <person name="Hatzigeorgiou A.G."/>
            <person name="Paterson A.H."/>
            <person name="Ivarie R."/>
            <person name="Brandstrom M."/>
            <person name="Axelsson E."/>
            <person name="Backstrom N."/>
            <person name="Berlin S."/>
            <person name="Webster M.T."/>
            <person name="Pourquie O."/>
            <person name="Reymond A."/>
            <person name="Ucla C."/>
            <person name="Antonarakis S.E."/>
            <person name="Long M."/>
            <person name="Emerson J.J."/>
            <person name="Betran E."/>
            <person name="Dupanloup I."/>
            <person name="Kaessmann H."/>
            <person name="Hinrichs A.S."/>
            <person name="Bejerano G."/>
            <person name="Furey T.S."/>
            <person name="Harte R.A."/>
            <person name="Raney B."/>
            <person name="Siepel A."/>
            <person name="Kent W.J."/>
            <person name="Haussler D."/>
            <person name="Eyras E."/>
            <person name="Castelo R."/>
            <person name="Abril J.F."/>
            <person name="Castellano S."/>
            <person name="Camara F."/>
            <person name="Parra G."/>
            <person name="Guigo R."/>
            <person name="Bourque G."/>
            <person name="Tesler G."/>
            <person name="Pevzner P.A."/>
            <person name="Smit A."/>
            <person name="Fulton L.A."/>
            <person name="Mardis E.R."/>
            <person name="Wilson R.K."/>
        </authorList>
    </citation>
    <scope>NUCLEOTIDE SEQUENCE [LARGE SCALE GENOMIC DNA]</scope>
    <source>
        <strain>Red jungle fowl</strain>
    </source>
</reference>
<keyword id="KW-0072">Autophagy</keyword>
<keyword id="KW-0968">Cytoplasmic vesicle</keyword>
<keyword id="KW-0446">Lipid-binding</keyword>
<keyword id="KW-0458">Lysosome</keyword>
<keyword id="KW-0472">Membrane</keyword>
<keyword id="KW-1185">Reference proteome</keyword>
<keyword id="KW-0677">Repeat</keyword>
<proteinExistence type="inferred from homology"/>
<evidence type="ECO:0000250" key="1"/>
<evidence type="ECO:0000256" key="2">
    <source>
        <dbReference type="SAM" id="MobiDB-lite"/>
    </source>
</evidence>
<evidence type="ECO:0000305" key="3"/>
<name>TCPR1_CHICK</name>
<sequence>MSSSLLWAVDIFGRVYTLSTVGQYWELCKDTQLEFKRVSAVKQCCWGIACDHQVYTYVFSGDVPIRYQEETYENQRWNPVGGFCEKLMPSDRWQWSDVSGLKHQQLDSFTLPSPHWEWESDWYVDENIGGEPTEKGGWTYAIDFPSTYTKDKKWNSCVRRRRWIRYRRYKSRDVWAKITSHDDPERLPDPFNDISIGGWEITDEPLGRLSVWAVSLQGRVWYRENVCHHNPEGSTWSLISTPGEVAQISCGSYDLLWATLWEGQAIVREGIDRNNPQGISWSTVESPSSDNGIMHVSVGVDVVWCITKDRKVWFRRGVNSHNPCGTSWIEMVGEMMMVNVGLNNQVWGIGCDDRTIYFRQGVTPSELSGKMWKAIVCGRESDRSQTGSSTSLLSAGCFFTDDIQNQTNTVIQGDADTSSDTELSSIPTNLSSTPPMGAAASSASSTGSQAAGAPASVTVDPLDSDQGEAPAASASDEKAHLESRKSTNPTPSTELQWTNIDLKEAHRHAVLSVSTFTETSSLSSLGMFSVGAEEQYGADEHPLWAWVSGGGCLVDLHSPLKWFAVPSGLSSSVQSLSLSITPAQTAAWRKQIFQQLSERTKRELENFRHYEQAVEQSVWVKTGMLQWWRNWKPHKWMDVRVALEQFTGSDGMRDSILFIYYMYHEEKKYIHVFLNEVTIIAEVLKEGKHSFALYTPERTKQRWPICLAATTEQEMHDWLSLLTMSCCESRRIQGPPSHHAIWSVSCKGDIFVSEPSPELEAEPHPMPCDQMFWRQVGGHLRLVECNNRGIVWGIGYDHTVWVYTGGYGGGFIQGLASSADNIYTQSDVKCVYIYENQRWNPVTGYSSRGLPTDRYMWSDASGLQECTKANTKPPSPQWSWVSDWYIDFSTSGGTDREGWQYAADFPASYHGHKTMKDFVRRRRWARKCKIVTNGPWLEVPPVTLWDISIIPSSDADDEESVALWAISDKGDVLCRLGVTQQNPAGTSWLHVGTDQPFVSISVGAFFQVWAVARDGSAFYRGSVSPKKPAGDCWYHIPSPQKQKLKQVSVGRTSVFVLDKNGNLWYRQGITPSYPQGSAWDHVSNNIRKMSVGPLDQVWVIADKVQGSHGLSCGTVCHRTGVQPMEPKGLAWDYGIGGGWEHVTVRGNASQAPRGTVPSESPPEPMESEGRVMC</sequence>